<organism>
    <name type="scientific">Bacillus subtilis (strain 168)</name>
    <dbReference type="NCBI Taxonomy" id="224308"/>
    <lineage>
        <taxon>Bacteria</taxon>
        <taxon>Bacillati</taxon>
        <taxon>Bacillota</taxon>
        <taxon>Bacilli</taxon>
        <taxon>Bacillales</taxon>
        <taxon>Bacillaceae</taxon>
        <taxon>Bacillus</taxon>
    </lineage>
</organism>
<protein>
    <recommendedName>
        <fullName evidence="3">Large ribosomal subunit protein bL19</fullName>
    </recommendedName>
    <alternativeName>
        <fullName>50S ribosomal protein L19</fullName>
    </alternativeName>
</protein>
<keyword id="KW-0002">3D-structure</keyword>
<keyword id="KW-1185">Reference proteome</keyword>
<keyword id="KW-0687">Ribonucleoprotein</keyword>
<keyword id="KW-0689">Ribosomal protein</keyword>
<dbReference type="EMBL" id="AL009126">
    <property type="protein sequence ID" value="CAB13477.2"/>
    <property type="molecule type" value="Genomic_DNA"/>
</dbReference>
<dbReference type="PIR" id="E69696">
    <property type="entry name" value="E69696"/>
</dbReference>
<dbReference type="RefSeq" id="NP_389486.2">
    <property type="nucleotide sequence ID" value="NC_000964.3"/>
</dbReference>
<dbReference type="RefSeq" id="WP_003220825.1">
    <property type="nucleotide sequence ID" value="NZ_OZ025638.1"/>
</dbReference>
<dbReference type="PDB" id="3J3V">
    <property type="method" value="EM"/>
    <property type="resolution" value="13.30 A"/>
    <property type="chains" value="P=1-115"/>
</dbReference>
<dbReference type="PDB" id="3J3W">
    <property type="method" value="EM"/>
    <property type="resolution" value="10.70 A"/>
    <property type="chains" value="P=1-115"/>
</dbReference>
<dbReference type="PDB" id="3J9W">
    <property type="method" value="EM"/>
    <property type="resolution" value="3.90 A"/>
    <property type="chains" value="BS=1-115"/>
</dbReference>
<dbReference type="PDB" id="5NJT">
    <property type="method" value="EM"/>
    <property type="resolution" value="3.80 A"/>
    <property type="chains" value="i=2-115"/>
</dbReference>
<dbReference type="PDB" id="6HA1">
    <property type="method" value="EM"/>
    <property type="resolution" value="3.10 A"/>
    <property type="chains" value="P=1-115"/>
</dbReference>
<dbReference type="PDB" id="6HA8">
    <property type="method" value="EM"/>
    <property type="resolution" value="3.50 A"/>
    <property type="chains" value="P=1-115"/>
</dbReference>
<dbReference type="PDB" id="6HTQ">
    <property type="method" value="EM"/>
    <property type="resolution" value="4.50 A"/>
    <property type="chains" value="P=1-115"/>
</dbReference>
<dbReference type="PDB" id="6PPF">
    <property type="method" value="EM"/>
    <property type="resolution" value="3.40 A"/>
    <property type="chains" value="P=1-115"/>
</dbReference>
<dbReference type="PDB" id="6PPK">
    <property type="method" value="EM"/>
    <property type="resolution" value="4.40 A"/>
    <property type="chains" value="P=1-115"/>
</dbReference>
<dbReference type="PDB" id="6PVK">
    <property type="method" value="EM"/>
    <property type="resolution" value="3.40 A"/>
    <property type="chains" value="P=1-115"/>
</dbReference>
<dbReference type="PDB" id="6TNN">
    <property type="method" value="EM"/>
    <property type="resolution" value="3.07 A"/>
    <property type="chains" value="i=1-115"/>
</dbReference>
<dbReference type="PDB" id="6TPQ">
    <property type="method" value="EM"/>
    <property type="resolution" value="3.07 A"/>
    <property type="chains" value="i=1-115"/>
</dbReference>
<dbReference type="PDB" id="7AQC">
    <property type="method" value="EM"/>
    <property type="resolution" value="2.99 A"/>
    <property type="chains" value="a=1-115"/>
</dbReference>
<dbReference type="PDB" id="7AQD">
    <property type="method" value="EM"/>
    <property type="resolution" value="3.10 A"/>
    <property type="chains" value="a=1-115"/>
</dbReference>
<dbReference type="PDB" id="7AS8">
    <property type="method" value="EM"/>
    <property type="resolution" value="2.90 A"/>
    <property type="chains" value="T=1-115"/>
</dbReference>
<dbReference type="PDB" id="7AS9">
    <property type="method" value="EM"/>
    <property type="resolution" value="3.50 A"/>
    <property type="chains" value="T=1-115"/>
</dbReference>
<dbReference type="PDB" id="7O5B">
    <property type="method" value="EM"/>
    <property type="resolution" value="3.33 A"/>
    <property type="chains" value="m=1-115"/>
</dbReference>
<dbReference type="PDB" id="7OPE">
    <property type="method" value="EM"/>
    <property type="resolution" value="3.20 A"/>
    <property type="chains" value="T=1-115"/>
</dbReference>
<dbReference type="PDB" id="7QGU">
    <property type="method" value="EM"/>
    <property type="resolution" value="4.75 A"/>
    <property type="chains" value="P=1-115"/>
</dbReference>
<dbReference type="PDB" id="7QH4">
    <property type="method" value="EM"/>
    <property type="resolution" value="5.45 A"/>
    <property type="chains" value="P=1-115"/>
</dbReference>
<dbReference type="PDB" id="7QV1">
    <property type="method" value="EM"/>
    <property type="resolution" value="3.50 A"/>
    <property type="chains" value="P=1-115"/>
</dbReference>
<dbReference type="PDB" id="7QV2">
    <property type="method" value="EM"/>
    <property type="resolution" value="3.50 A"/>
    <property type="chains" value="P=1-115"/>
</dbReference>
<dbReference type="PDB" id="7QV3">
    <property type="method" value="EM"/>
    <property type="resolution" value="5.14 A"/>
    <property type="chains" value="P=1-115"/>
</dbReference>
<dbReference type="PDB" id="7S9U">
    <property type="method" value="EM"/>
    <property type="resolution" value="3.20 A"/>
    <property type="chains" value="P=1-115"/>
</dbReference>
<dbReference type="PDB" id="7SAE">
    <property type="method" value="EM"/>
    <property type="resolution" value="3.00 A"/>
    <property type="chains" value="P=1-115"/>
</dbReference>
<dbReference type="PDB" id="8BUU">
    <property type="method" value="EM"/>
    <property type="resolution" value="2.90 A"/>
    <property type="chains" value="P=1-115"/>
</dbReference>
<dbReference type="PDB" id="8QCQ">
    <property type="method" value="EM"/>
    <property type="resolution" value="2.30 A"/>
    <property type="chains" value="P=1-115"/>
</dbReference>
<dbReference type="PDB" id="8QPP">
    <property type="method" value="EM"/>
    <property type="resolution" value="3.40 A"/>
    <property type="chains" value="m=1-115"/>
</dbReference>
<dbReference type="PDB" id="8R55">
    <property type="method" value="EM"/>
    <property type="resolution" value="3.57 A"/>
    <property type="chains" value="m=1-115"/>
</dbReference>
<dbReference type="PDB" id="8S1P">
    <property type="method" value="EM"/>
    <property type="resolution" value="1.96 A"/>
    <property type="chains" value="P=1-115"/>
</dbReference>
<dbReference type="PDB" id="8S1U">
    <property type="method" value="EM"/>
    <property type="resolution" value="3.40 A"/>
    <property type="chains" value="P=1-115"/>
</dbReference>
<dbReference type="PDB" id="9BS0">
    <property type="method" value="EM"/>
    <property type="resolution" value="3.30 A"/>
    <property type="chains" value="K=1-115"/>
</dbReference>
<dbReference type="PDB" id="9BSL">
    <property type="method" value="EM"/>
    <property type="resolution" value="3.10 A"/>
    <property type="chains" value="K=1-115"/>
</dbReference>
<dbReference type="PDB" id="9BSS">
    <property type="method" value="EM"/>
    <property type="resolution" value="3.10 A"/>
    <property type="chains" value="K=1-115"/>
</dbReference>
<dbReference type="PDBsum" id="3J3V"/>
<dbReference type="PDBsum" id="3J3W"/>
<dbReference type="PDBsum" id="3J9W"/>
<dbReference type="PDBsum" id="5NJT"/>
<dbReference type="PDBsum" id="6HA1"/>
<dbReference type="PDBsum" id="6HA8"/>
<dbReference type="PDBsum" id="6HTQ"/>
<dbReference type="PDBsum" id="6PPF"/>
<dbReference type="PDBsum" id="6PPK"/>
<dbReference type="PDBsum" id="6PVK"/>
<dbReference type="PDBsum" id="6TNN"/>
<dbReference type="PDBsum" id="6TPQ"/>
<dbReference type="PDBsum" id="7AQC"/>
<dbReference type="PDBsum" id="7AQD"/>
<dbReference type="PDBsum" id="7AS8"/>
<dbReference type="PDBsum" id="7AS9"/>
<dbReference type="PDBsum" id="7O5B"/>
<dbReference type="PDBsum" id="7OPE"/>
<dbReference type="PDBsum" id="7QGU"/>
<dbReference type="PDBsum" id="7QH4"/>
<dbReference type="PDBsum" id="7QV1"/>
<dbReference type="PDBsum" id="7QV2"/>
<dbReference type="PDBsum" id="7QV3"/>
<dbReference type="PDBsum" id="7S9U"/>
<dbReference type="PDBsum" id="7SAE"/>
<dbReference type="PDBsum" id="8BUU"/>
<dbReference type="PDBsum" id="8QCQ"/>
<dbReference type="PDBsum" id="8QPP"/>
<dbReference type="PDBsum" id="8R55"/>
<dbReference type="PDBsum" id="8S1P"/>
<dbReference type="PDBsum" id="8S1U"/>
<dbReference type="PDBsum" id="9BS0"/>
<dbReference type="PDBsum" id="9BSL"/>
<dbReference type="PDBsum" id="9BSS"/>
<dbReference type="EMDB" id="EMD-0176"/>
<dbReference type="EMDB" id="EMD-0177"/>
<dbReference type="EMDB" id="EMD-0270"/>
<dbReference type="EMDB" id="EMD-10535"/>
<dbReference type="EMDB" id="EMD-10543"/>
<dbReference type="EMDB" id="EMD-11862"/>
<dbReference type="EMDB" id="EMD-11864"/>
<dbReference type="EMDB" id="EMD-11889"/>
<dbReference type="EMDB" id="EMD-11890"/>
<dbReference type="EMDB" id="EMD-12734"/>
<dbReference type="EMDB" id="EMD-13017"/>
<dbReference type="EMDB" id="EMD-14157"/>
<dbReference type="EMDB" id="EMD-14158"/>
<dbReference type="EMDB" id="EMD-14159"/>
<dbReference type="EMDB" id="EMD-16246"/>
<dbReference type="EMDB" id="EMD-18332"/>
<dbReference type="EMDB" id="EMD-19638"/>
<dbReference type="EMDB" id="EMD-19641"/>
<dbReference type="EMDB" id="EMD-3656"/>
<dbReference type="EMDB" id="EMD-44849"/>
<dbReference type="EMDB" id="EMD-44869"/>
<dbReference type="EMDB" id="EMD-44871"/>
<dbReference type="SMR" id="O31742"/>
<dbReference type="FunCoup" id="O31742">
    <property type="interactions" value="528"/>
</dbReference>
<dbReference type="IntAct" id="O31742">
    <property type="interactions" value="1"/>
</dbReference>
<dbReference type="STRING" id="224308.BSU16040"/>
<dbReference type="PaxDb" id="224308-BSU16040"/>
<dbReference type="EnsemblBacteria" id="CAB13477">
    <property type="protein sequence ID" value="CAB13477"/>
    <property type="gene ID" value="BSU_16040"/>
</dbReference>
<dbReference type="GeneID" id="86873887"/>
<dbReference type="GeneID" id="937598"/>
<dbReference type="KEGG" id="bsu:BSU16040"/>
<dbReference type="PATRIC" id="fig|224308.179.peg.1744"/>
<dbReference type="eggNOG" id="COG0335">
    <property type="taxonomic scope" value="Bacteria"/>
</dbReference>
<dbReference type="InParanoid" id="O31742"/>
<dbReference type="OrthoDB" id="9803541at2"/>
<dbReference type="BioCyc" id="BSUB:BSU16040-MONOMER"/>
<dbReference type="EvolutionaryTrace" id="O31742"/>
<dbReference type="Proteomes" id="UP000001570">
    <property type="component" value="Chromosome"/>
</dbReference>
<dbReference type="GO" id="GO:0022625">
    <property type="term" value="C:cytosolic large ribosomal subunit"/>
    <property type="evidence" value="ECO:0000318"/>
    <property type="project" value="GO_Central"/>
</dbReference>
<dbReference type="GO" id="GO:0003735">
    <property type="term" value="F:structural constituent of ribosome"/>
    <property type="evidence" value="ECO:0000318"/>
    <property type="project" value="GO_Central"/>
</dbReference>
<dbReference type="GO" id="GO:0006412">
    <property type="term" value="P:translation"/>
    <property type="evidence" value="ECO:0007669"/>
    <property type="project" value="UniProtKB-UniRule"/>
</dbReference>
<dbReference type="FunFam" id="2.30.30.790:FF:000001">
    <property type="entry name" value="50S ribosomal protein L19"/>
    <property type="match status" value="1"/>
</dbReference>
<dbReference type="Gene3D" id="2.30.30.790">
    <property type="match status" value="1"/>
</dbReference>
<dbReference type="HAMAP" id="MF_00402">
    <property type="entry name" value="Ribosomal_bL19"/>
    <property type="match status" value="1"/>
</dbReference>
<dbReference type="InterPro" id="IPR001857">
    <property type="entry name" value="Ribosomal_bL19"/>
</dbReference>
<dbReference type="InterPro" id="IPR018257">
    <property type="entry name" value="Ribosomal_bL19_CS"/>
</dbReference>
<dbReference type="InterPro" id="IPR038657">
    <property type="entry name" value="Ribosomal_bL19_sf"/>
</dbReference>
<dbReference type="InterPro" id="IPR008991">
    <property type="entry name" value="Translation_prot_SH3-like_sf"/>
</dbReference>
<dbReference type="NCBIfam" id="TIGR01024">
    <property type="entry name" value="rplS_bact"/>
    <property type="match status" value="1"/>
</dbReference>
<dbReference type="PANTHER" id="PTHR15680:SF9">
    <property type="entry name" value="LARGE RIBOSOMAL SUBUNIT PROTEIN BL19M"/>
    <property type="match status" value="1"/>
</dbReference>
<dbReference type="PANTHER" id="PTHR15680">
    <property type="entry name" value="RIBOSOMAL PROTEIN L19"/>
    <property type="match status" value="1"/>
</dbReference>
<dbReference type="Pfam" id="PF01245">
    <property type="entry name" value="Ribosomal_L19"/>
    <property type="match status" value="1"/>
</dbReference>
<dbReference type="PIRSF" id="PIRSF002191">
    <property type="entry name" value="Ribosomal_L19"/>
    <property type="match status" value="1"/>
</dbReference>
<dbReference type="PRINTS" id="PR00061">
    <property type="entry name" value="RIBOSOMALL19"/>
</dbReference>
<dbReference type="SUPFAM" id="SSF50104">
    <property type="entry name" value="Translation proteins SH3-like domain"/>
    <property type="match status" value="1"/>
</dbReference>
<dbReference type="PROSITE" id="PS01015">
    <property type="entry name" value="RIBOSOMAL_L19"/>
    <property type="match status" value="1"/>
</dbReference>
<reference key="1">
    <citation type="journal article" date="1997" name="Nature">
        <title>The complete genome sequence of the Gram-positive bacterium Bacillus subtilis.</title>
        <authorList>
            <person name="Kunst F."/>
            <person name="Ogasawara N."/>
            <person name="Moszer I."/>
            <person name="Albertini A.M."/>
            <person name="Alloni G."/>
            <person name="Azevedo V."/>
            <person name="Bertero M.G."/>
            <person name="Bessieres P."/>
            <person name="Bolotin A."/>
            <person name="Borchert S."/>
            <person name="Borriss R."/>
            <person name="Boursier L."/>
            <person name="Brans A."/>
            <person name="Braun M."/>
            <person name="Brignell S.C."/>
            <person name="Bron S."/>
            <person name="Brouillet S."/>
            <person name="Bruschi C.V."/>
            <person name="Caldwell B."/>
            <person name="Capuano V."/>
            <person name="Carter N.M."/>
            <person name="Choi S.-K."/>
            <person name="Codani J.-J."/>
            <person name="Connerton I.F."/>
            <person name="Cummings N.J."/>
            <person name="Daniel R.A."/>
            <person name="Denizot F."/>
            <person name="Devine K.M."/>
            <person name="Duesterhoeft A."/>
            <person name="Ehrlich S.D."/>
            <person name="Emmerson P.T."/>
            <person name="Entian K.-D."/>
            <person name="Errington J."/>
            <person name="Fabret C."/>
            <person name="Ferrari E."/>
            <person name="Foulger D."/>
            <person name="Fritz C."/>
            <person name="Fujita M."/>
            <person name="Fujita Y."/>
            <person name="Fuma S."/>
            <person name="Galizzi A."/>
            <person name="Galleron N."/>
            <person name="Ghim S.-Y."/>
            <person name="Glaser P."/>
            <person name="Goffeau A."/>
            <person name="Golightly E.J."/>
            <person name="Grandi G."/>
            <person name="Guiseppi G."/>
            <person name="Guy B.J."/>
            <person name="Haga K."/>
            <person name="Haiech J."/>
            <person name="Harwood C.R."/>
            <person name="Henaut A."/>
            <person name="Hilbert H."/>
            <person name="Holsappel S."/>
            <person name="Hosono S."/>
            <person name="Hullo M.-F."/>
            <person name="Itaya M."/>
            <person name="Jones L.-M."/>
            <person name="Joris B."/>
            <person name="Karamata D."/>
            <person name="Kasahara Y."/>
            <person name="Klaerr-Blanchard M."/>
            <person name="Klein C."/>
            <person name="Kobayashi Y."/>
            <person name="Koetter P."/>
            <person name="Koningstein G."/>
            <person name="Krogh S."/>
            <person name="Kumano M."/>
            <person name="Kurita K."/>
            <person name="Lapidus A."/>
            <person name="Lardinois S."/>
            <person name="Lauber J."/>
            <person name="Lazarevic V."/>
            <person name="Lee S.-M."/>
            <person name="Levine A."/>
            <person name="Liu H."/>
            <person name="Masuda S."/>
            <person name="Mauel C."/>
            <person name="Medigue C."/>
            <person name="Medina N."/>
            <person name="Mellado R.P."/>
            <person name="Mizuno M."/>
            <person name="Moestl D."/>
            <person name="Nakai S."/>
            <person name="Noback M."/>
            <person name="Noone D."/>
            <person name="O'Reilly M."/>
            <person name="Ogawa K."/>
            <person name="Ogiwara A."/>
            <person name="Oudega B."/>
            <person name="Park S.-H."/>
            <person name="Parro V."/>
            <person name="Pohl T.M."/>
            <person name="Portetelle D."/>
            <person name="Porwollik S."/>
            <person name="Prescott A.M."/>
            <person name="Presecan E."/>
            <person name="Pujic P."/>
            <person name="Purnelle B."/>
            <person name="Rapoport G."/>
            <person name="Rey M."/>
            <person name="Reynolds S."/>
            <person name="Rieger M."/>
            <person name="Rivolta C."/>
            <person name="Rocha E."/>
            <person name="Roche B."/>
            <person name="Rose M."/>
            <person name="Sadaie Y."/>
            <person name="Sato T."/>
            <person name="Scanlan E."/>
            <person name="Schleich S."/>
            <person name="Schroeter R."/>
            <person name="Scoffone F."/>
            <person name="Sekiguchi J."/>
            <person name="Sekowska A."/>
            <person name="Seror S.J."/>
            <person name="Serror P."/>
            <person name="Shin B.-S."/>
            <person name="Soldo B."/>
            <person name="Sorokin A."/>
            <person name="Tacconi E."/>
            <person name="Takagi T."/>
            <person name="Takahashi H."/>
            <person name="Takemaru K."/>
            <person name="Takeuchi M."/>
            <person name="Tamakoshi A."/>
            <person name="Tanaka T."/>
            <person name="Terpstra P."/>
            <person name="Tognoni A."/>
            <person name="Tosato V."/>
            <person name="Uchiyama S."/>
            <person name="Vandenbol M."/>
            <person name="Vannier F."/>
            <person name="Vassarotti A."/>
            <person name="Viari A."/>
            <person name="Wambutt R."/>
            <person name="Wedler E."/>
            <person name="Wedler H."/>
            <person name="Weitzenegger T."/>
            <person name="Winters P."/>
            <person name="Wipat A."/>
            <person name="Yamamoto H."/>
            <person name="Yamane K."/>
            <person name="Yasumoto K."/>
            <person name="Yata K."/>
            <person name="Yoshida K."/>
            <person name="Yoshikawa H.-F."/>
            <person name="Zumstein E."/>
            <person name="Yoshikawa H."/>
            <person name="Danchin A."/>
        </authorList>
    </citation>
    <scope>NUCLEOTIDE SEQUENCE [LARGE SCALE GENOMIC DNA]</scope>
    <source>
        <strain>168</strain>
    </source>
</reference>
<reference evidence="4 5" key="2">
    <citation type="journal article" date="2018" name="Proc. Natl. Acad. Sci. U.S.A.">
        <title>Structural basis for antibiotic resistance mediated by the Bacillus subtilis ABCF ATPase VmlR.</title>
        <authorList>
            <person name="Crowe-McAuliffe C."/>
            <person name="Graf M."/>
            <person name="Huter P."/>
            <person name="Takada H."/>
            <person name="Abdelshahid M."/>
            <person name="Novacek J."/>
            <person name="Murina V."/>
            <person name="Atkinson G.C."/>
            <person name="Hauryliuk V."/>
            <person name="Wilson D.N."/>
        </authorList>
    </citation>
    <scope>STRUCTURE BY ELECTRON MICROSCOPY (3.10 ANGSTROMS) OF 1-115 WITH AND WITHOUT VIRGINIAMYCIN M</scope>
    <scope>SUBUNIT</scope>
</reference>
<evidence type="ECO:0000250" key="1"/>
<evidence type="ECO:0000269" key="2">
    <source>
    </source>
</evidence>
<evidence type="ECO:0000305" key="3"/>
<evidence type="ECO:0007744" key="4">
    <source>
        <dbReference type="PDB" id="6HA1"/>
    </source>
</evidence>
<evidence type="ECO:0007744" key="5">
    <source>
        <dbReference type="PDB" id="6HA8"/>
    </source>
</evidence>
<evidence type="ECO:0007829" key="6">
    <source>
        <dbReference type="PDB" id="6TNN"/>
    </source>
</evidence>
<evidence type="ECO:0007829" key="7">
    <source>
        <dbReference type="PDB" id="7AQC"/>
    </source>
</evidence>
<evidence type="ECO:0007829" key="8">
    <source>
        <dbReference type="PDB" id="8S1P"/>
    </source>
</evidence>
<name>RL19_BACSU</name>
<accession>O31742</accession>
<gene>
    <name type="primary">rplS</name>
    <name type="ordered locus">BSU16040</name>
</gene>
<sequence length="115" mass="13387">MQKLIEDITKEQLRTDLPAFRPGDTLRVHVKVVEGNRERIQIFEGVVIKRRGGGISETFTVRKISYGVGVERTFPVHTPKIAKIEVVRYGKVRRAKLYYLRELRGKAARIKEIRR</sequence>
<comment type="function">
    <text evidence="1">This protein is located at the 30S-50S ribosomal subunit interface and may play a role in the structure and function of the aminoacyl-tRNA binding site.</text>
</comment>
<comment type="subunit">
    <text evidence="2">Part of the 50S ribosomal subunit.</text>
</comment>
<comment type="similarity">
    <text evidence="3">Belongs to the bacterial ribosomal protein bL19 family.</text>
</comment>
<feature type="chain" id="PRO_0000163413" description="Large ribosomal subunit protein bL19">
    <location>
        <begin position="1"/>
        <end position="115"/>
    </location>
</feature>
<feature type="helix" evidence="8">
    <location>
        <begin position="3"/>
        <end position="9"/>
    </location>
</feature>
<feature type="helix" evidence="8">
    <location>
        <begin position="10"/>
        <end position="12"/>
    </location>
</feature>
<feature type="strand" evidence="8">
    <location>
        <begin position="25"/>
        <end position="34"/>
    </location>
</feature>
<feature type="strand" evidence="8">
    <location>
        <begin position="37"/>
        <end position="51"/>
    </location>
</feature>
<feature type="helix" evidence="8">
    <location>
        <begin position="54"/>
        <end position="56"/>
    </location>
</feature>
<feature type="strand" evidence="8">
    <location>
        <begin position="58"/>
        <end position="65"/>
    </location>
</feature>
<feature type="strand" evidence="8">
    <location>
        <begin position="68"/>
        <end position="75"/>
    </location>
</feature>
<feature type="strand" evidence="8">
    <location>
        <begin position="81"/>
        <end position="88"/>
    </location>
</feature>
<feature type="strand" evidence="8">
    <location>
        <begin position="93"/>
        <end position="95"/>
    </location>
</feature>
<feature type="helix" evidence="8">
    <location>
        <begin position="98"/>
        <end position="101"/>
    </location>
</feature>
<feature type="turn" evidence="6">
    <location>
        <begin position="102"/>
        <end position="104"/>
    </location>
</feature>
<feature type="turn" evidence="8">
    <location>
        <begin position="105"/>
        <end position="108"/>
    </location>
</feature>
<feature type="strand" evidence="7">
    <location>
        <begin position="112"/>
        <end position="114"/>
    </location>
</feature>
<proteinExistence type="evidence at protein level"/>